<organism>
    <name type="scientific">Pseudomonas paraeruginosa (strain DSM 24068 / PA7)</name>
    <name type="common">Pseudomonas aeruginosa (strain PA7)</name>
    <dbReference type="NCBI Taxonomy" id="381754"/>
    <lineage>
        <taxon>Bacteria</taxon>
        <taxon>Pseudomonadati</taxon>
        <taxon>Pseudomonadota</taxon>
        <taxon>Gammaproteobacteria</taxon>
        <taxon>Pseudomonadales</taxon>
        <taxon>Pseudomonadaceae</taxon>
        <taxon>Pseudomonas</taxon>
        <taxon>Pseudomonas paraeruginosa</taxon>
    </lineage>
</organism>
<sequence length="403" mass="44097">MGLRNLLDKVEHHFEKGGRYEKWYPLYEAVDTFLYRPGSVTRTTAHVRDGIDLKRMMIIVWLCTFPAMFFGMYNVGHQANLIFAQSPDLLGAQDGWRFALIGALAGFDPNSLWDCLVQGAAYFLPVYLTTFIVGGFWEVLFATIRRHEVNEGFFVTSVLFALTLPPSVPLWQVALGISFGVVLGKEVFGGTGKNFLNPALVGRAFLFFAYPAQMSGDAVWTSVDGFAGATSLSLAAAGGVDNILGHGLTWMDAFLGHMQGSMGETSTLAIFIGGAVLLLTRIASWRIVAGVMLGMIAMSYLFNAIGSTSNPMFAMPWYWHLVTGGFAFGMIFMATDPVSASMTDTGKWLFGALIGVMVMLIRVVNPAFPEGMMLAILFANLFAPLIDHFVVQANIKRRLARNG</sequence>
<evidence type="ECO:0000255" key="1">
    <source>
        <dbReference type="HAMAP-Rule" id="MF_00426"/>
    </source>
</evidence>
<name>NQRB_PSEP7</name>
<comment type="function">
    <text evidence="1">NQR complex catalyzes the reduction of ubiquinone-1 to ubiquinol by two successive reactions, coupled with the transport of Na(+) ions from the cytoplasm to the periplasm. NqrA to NqrE are probably involved in the second step, the conversion of ubisemiquinone to ubiquinol.</text>
</comment>
<comment type="catalytic activity">
    <reaction evidence="1">
        <text>a ubiquinone + n Na(+)(in) + NADH + H(+) = a ubiquinol + n Na(+)(out) + NAD(+)</text>
        <dbReference type="Rhea" id="RHEA:47748"/>
        <dbReference type="Rhea" id="RHEA-COMP:9565"/>
        <dbReference type="Rhea" id="RHEA-COMP:9566"/>
        <dbReference type="ChEBI" id="CHEBI:15378"/>
        <dbReference type="ChEBI" id="CHEBI:16389"/>
        <dbReference type="ChEBI" id="CHEBI:17976"/>
        <dbReference type="ChEBI" id="CHEBI:29101"/>
        <dbReference type="ChEBI" id="CHEBI:57540"/>
        <dbReference type="ChEBI" id="CHEBI:57945"/>
        <dbReference type="EC" id="7.2.1.1"/>
    </reaction>
</comment>
<comment type="cofactor">
    <cofactor evidence="1">
        <name>FMN</name>
        <dbReference type="ChEBI" id="CHEBI:58210"/>
    </cofactor>
</comment>
<comment type="subunit">
    <text evidence="1">Composed of six subunits; NqrA, NqrB, NqrC, NqrD, NqrE and NqrF.</text>
</comment>
<comment type="subcellular location">
    <subcellularLocation>
        <location evidence="1">Cell inner membrane</location>
        <topology evidence="1">Multi-pass membrane protein</topology>
    </subcellularLocation>
</comment>
<comment type="similarity">
    <text evidence="1">Belongs to the NqrB/RnfD family.</text>
</comment>
<reference key="1">
    <citation type="submission" date="2007-06" db="EMBL/GenBank/DDBJ databases">
        <authorList>
            <person name="Dodson R.J."/>
            <person name="Harkins D."/>
            <person name="Paulsen I.T."/>
        </authorList>
    </citation>
    <scope>NUCLEOTIDE SEQUENCE [LARGE SCALE GENOMIC DNA]</scope>
    <source>
        <strain>DSM 24068 / PA7</strain>
    </source>
</reference>
<gene>
    <name evidence="1" type="primary">nqrB</name>
    <name type="ordered locus">PSPA7_2161</name>
</gene>
<dbReference type="EC" id="7.2.1.1" evidence="1"/>
<dbReference type="EMBL" id="CP000744">
    <property type="protein sequence ID" value="ABR80839.1"/>
    <property type="molecule type" value="Genomic_DNA"/>
</dbReference>
<dbReference type="RefSeq" id="WP_012075156.1">
    <property type="nucleotide sequence ID" value="NC_009656.1"/>
</dbReference>
<dbReference type="SMR" id="A6V398"/>
<dbReference type="KEGG" id="pap:PSPA7_2161"/>
<dbReference type="HOGENOM" id="CLU_042020_1_1_6"/>
<dbReference type="Proteomes" id="UP000001582">
    <property type="component" value="Chromosome"/>
</dbReference>
<dbReference type="GO" id="GO:0005886">
    <property type="term" value="C:plasma membrane"/>
    <property type="evidence" value="ECO:0007669"/>
    <property type="project" value="UniProtKB-SubCell"/>
</dbReference>
<dbReference type="GO" id="GO:0010181">
    <property type="term" value="F:FMN binding"/>
    <property type="evidence" value="ECO:0007669"/>
    <property type="project" value="InterPro"/>
</dbReference>
<dbReference type="GO" id="GO:0016655">
    <property type="term" value="F:oxidoreductase activity, acting on NAD(P)H, quinone or similar compound as acceptor"/>
    <property type="evidence" value="ECO:0007669"/>
    <property type="project" value="UniProtKB-UniRule"/>
</dbReference>
<dbReference type="GO" id="GO:0022904">
    <property type="term" value="P:respiratory electron transport chain"/>
    <property type="evidence" value="ECO:0007669"/>
    <property type="project" value="InterPro"/>
</dbReference>
<dbReference type="GO" id="GO:0006814">
    <property type="term" value="P:sodium ion transport"/>
    <property type="evidence" value="ECO:0007669"/>
    <property type="project" value="UniProtKB-UniRule"/>
</dbReference>
<dbReference type="GO" id="GO:0055085">
    <property type="term" value="P:transmembrane transport"/>
    <property type="evidence" value="ECO:0007669"/>
    <property type="project" value="InterPro"/>
</dbReference>
<dbReference type="HAMAP" id="MF_00426">
    <property type="entry name" value="NqrB"/>
    <property type="match status" value="1"/>
</dbReference>
<dbReference type="InterPro" id="IPR010966">
    <property type="entry name" value="NqrB"/>
</dbReference>
<dbReference type="InterPro" id="IPR004338">
    <property type="entry name" value="NqrB/RnfD"/>
</dbReference>
<dbReference type="NCBIfam" id="TIGR01937">
    <property type="entry name" value="nqrB"/>
    <property type="match status" value="1"/>
</dbReference>
<dbReference type="NCBIfam" id="NF003756">
    <property type="entry name" value="PRK05349.1"/>
    <property type="match status" value="1"/>
</dbReference>
<dbReference type="PANTHER" id="PTHR30578">
    <property type="entry name" value="ELECTRON TRANSPORT COMPLEX PROTEIN RNFD"/>
    <property type="match status" value="1"/>
</dbReference>
<dbReference type="PANTHER" id="PTHR30578:SF1">
    <property type="entry name" value="NA(+)-TRANSLOCATING NADH-QUINONE REDUCTASE SUBUNIT B"/>
    <property type="match status" value="1"/>
</dbReference>
<dbReference type="Pfam" id="PF03116">
    <property type="entry name" value="NQR2_RnfD_RnfE"/>
    <property type="match status" value="1"/>
</dbReference>
<dbReference type="PIRSF" id="PIRSF016055">
    <property type="entry name" value="NADH-UbQ_OxRdtase_B_su"/>
    <property type="match status" value="1"/>
</dbReference>
<keyword id="KW-0997">Cell inner membrane</keyword>
<keyword id="KW-1003">Cell membrane</keyword>
<keyword id="KW-0285">Flavoprotein</keyword>
<keyword id="KW-0288">FMN</keyword>
<keyword id="KW-0406">Ion transport</keyword>
<keyword id="KW-0472">Membrane</keyword>
<keyword id="KW-0520">NAD</keyword>
<keyword id="KW-0597">Phosphoprotein</keyword>
<keyword id="KW-0915">Sodium</keyword>
<keyword id="KW-0739">Sodium transport</keyword>
<keyword id="KW-1278">Translocase</keyword>
<keyword id="KW-0812">Transmembrane</keyword>
<keyword id="KW-1133">Transmembrane helix</keyword>
<keyword id="KW-0813">Transport</keyword>
<keyword id="KW-0830">Ubiquinone</keyword>
<protein>
    <recommendedName>
        <fullName evidence="1">Na(+)-translocating NADH-quinone reductase subunit B</fullName>
        <shortName evidence="1">Na(+)-NQR subunit B</shortName>
        <shortName evidence="1">Na(+)-translocating NQR subunit B</shortName>
        <ecNumber evidence="1">7.2.1.1</ecNumber>
    </recommendedName>
    <alternativeName>
        <fullName evidence="1">NQR complex subunit B</fullName>
    </alternativeName>
    <alternativeName>
        <fullName evidence="1">NQR-1 subunit B</fullName>
    </alternativeName>
</protein>
<proteinExistence type="inferred from homology"/>
<accession>A6V398</accession>
<feature type="chain" id="PRO_1000060143" description="Na(+)-translocating NADH-quinone reductase subunit B">
    <location>
        <begin position="1"/>
        <end position="403"/>
    </location>
</feature>
<feature type="transmembrane region" description="Helical" evidence="1">
    <location>
        <begin position="56"/>
        <end position="76"/>
    </location>
</feature>
<feature type="transmembrane region" description="Helical" evidence="1">
    <location>
        <begin position="121"/>
        <end position="141"/>
    </location>
</feature>
<feature type="transmembrane region" description="Helical" evidence="1">
    <location>
        <begin position="164"/>
        <end position="184"/>
    </location>
</feature>
<feature type="transmembrane region" description="Helical" evidence="1">
    <location>
        <begin position="225"/>
        <end position="245"/>
    </location>
</feature>
<feature type="transmembrane region" description="Helical" evidence="1">
    <location>
        <begin position="260"/>
        <end position="280"/>
    </location>
</feature>
<feature type="transmembrane region" description="Helical" evidence="1">
    <location>
        <begin position="287"/>
        <end position="307"/>
    </location>
</feature>
<feature type="transmembrane region" description="Helical" evidence="1">
    <location>
        <begin position="312"/>
        <end position="332"/>
    </location>
</feature>
<feature type="transmembrane region" description="Helical" evidence="1">
    <location>
        <begin position="348"/>
        <end position="368"/>
    </location>
</feature>
<feature type="transmembrane region" description="Helical" evidence="1">
    <location>
        <begin position="371"/>
        <end position="391"/>
    </location>
</feature>
<feature type="modified residue" description="FMN phosphoryl threonine" evidence="1">
    <location>
        <position position="230"/>
    </location>
</feature>